<comment type="subcellular location">
    <subcellularLocation>
        <location evidence="1">Plastid</location>
        <location evidence="1">Chloroplast thylakoid membrane</location>
        <topology evidence="1">Multi-pass membrane protein</topology>
    </subcellularLocation>
</comment>
<comment type="similarity">
    <text evidence="1">Belongs to the PsaG/PsaK family.</text>
</comment>
<dbReference type="EMBL" id="AY673996">
    <property type="protein sequence ID" value="AAT79761.1"/>
    <property type="molecule type" value="Genomic_DNA"/>
</dbReference>
<dbReference type="RefSeq" id="YP_063686.1">
    <property type="nucleotide sequence ID" value="NC_006137.1"/>
</dbReference>
<dbReference type="SMR" id="Q6B8M4"/>
<dbReference type="GeneID" id="2943974"/>
<dbReference type="GO" id="GO:0009535">
    <property type="term" value="C:chloroplast thylakoid membrane"/>
    <property type="evidence" value="ECO:0007669"/>
    <property type="project" value="UniProtKB-SubCell"/>
</dbReference>
<dbReference type="GO" id="GO:0009522">
    <property type="term" value="C:photosystem I"/>
    <property type="evidence" value="ECO:0007669"/>
    <property type="project" value="UniProtKB-KW"/>
</dbReference>
<dbReference type="GO" id="GO:0015979">
    <property type="term" value="P:photosynthesis"/>
    <property type="evidence" value="ECO:0007669"/>
    <property type="project" value="UniProtKB-UniRule"/>
</dbReference>
<dbReference type="Gene3D" id="1.20.860.20">
    <property type="entry name" value="Photosystem I PsaK, reaction centre"/>
    <property type="match status" value="1"/>
</dbReference>
<dbReference type="HAMAP" id="MF_00474">
    <property type="entry name" value="PSI_PsaK"/>
    <property type="match status" value="1"/>
</dbReference>
<dbReference type="InterPro" id="IPR035982">
    <property type="entry name" value="PSI_centre_PsaK_sf"/>
</dbReference>
<dbReference type="InterPro" id="IPR000549">
    <property type="entry name" value="PSI_PsaG/PsaK"/>
</dbReference>
<dbReference type="InterPro" id="IPR017492">
    <property type="entry name" value="PSI_PsaK"/>
</dbReference>
<dbReference type="InterPro" id="IPR037101">
    <property type="entry name" value="PSI_PsaK_bact"/>
</dbReference>
<dbReference type="NCBIfam" id="TIGR03049">
    <property type="entry name" value="PS_I_psaK"/>
    <property type="match status" value="1"/>
</dbReference>
<dbReference type="Pfam" id="PF01241">
    <property type="entry name" value="PSI_PSAK"/>
    <property type="match status" value="1"/>
</dbReference>
<dbReference type="SUPFAM" id="SSF81563">
    <property type="entry name" value="Photosystem I reaction center subunit X, PsaK"/>
    <property type="match status" value="1"/>
</dbReference>
<dbReference type="PROSITE" id="PS01026">
    <property type="entry name" value="PHOTOSYSTEM_I_PSAGK"/>
    <property type="match status" value="1"/>
</dbReference>
<evidence type="ECO:0000255" key="1">
    <source>
        <dbReference type="HAMAP-Rule" id="MF_00474"/>
    </source>
</evidence>
<sequence>MNLQTLLSMISNTSSWSISTAIIMVICNLLCIGLGRYAIQVRGLGPSIPALGLKGFGLPELLATTSLGHIIGAGAIIGLNSIKIIN</sequence>
<accession>Q6B8M4</accession>
<geneLocation type="chloroplast"/>
<gene>
    <name evidence="1" type="primary">psaK</name>
    <name type="ordered locus">Grc000180</name>
</gene>
<protein>
    <recommendedName>
        <fullName evidence="1">Photosystem I reaction center subunit PsaK</fullName>
    </recommendedName>
    <alternativeName>
        <fullName evidence="1">PSI-K</fullName>
    </alternativeName>
    <alternativeName>
        <fullName evidence="1">Photosystem I subunit X</fullName>
    </alternativeName>
</protein>
<proteinExistence type="inferred from homology"/>
<reference key="1">
    <citation type="journal article" date="2004" name="J. Mol. Evol.">
        <title>Comparative analysis of the complete plastid genome sequence of the red alga Gracilaria tenuistipitata var. liui provides insights into the evolution of rhodoplasts and their relationship to other plastids.</title>
        <authorList>
            <person name="Hagopian J.C."/>
            <person name="Reis M."/>
            <person name="Kitajima J.P."/>
            <person name="Bhattacharya D."/>
            <person name="de Oliveira M.C."/>
        </authorList>
    </citation>
    <scope>NUCLEOTIDE SEQUENCE [LARGE SCALE GENOMIC DNA]</scope>
</reference>
<keyword id="KW-0150">Chloroplast</keyword>
<keyword id="KW-0472">Membrane</keyword>
<keyword id="KW-0602">Photosynthesis</keyword>
<keyword id="KW-0603">Photosystem I</keyword>
<keyword id="KW-0934">Plastid</keyword>
<keyword id="KW-0793">Thylakoid</keyword>
<keyword id="KW-0812">Transmembrane</keyword>
<keyword id="KW-1133">Transmembrane helix</keyword>
<name>PSAK_GRATL</name>
<feature type="chain" id="PRO_0000206214" description="Photosystem I reaction center subunit PsaK">
    <location>
        <begin position="1"/>
        <end position="86"/>
    </location>
</feature>
<feature type="transmembrane region" description="Helical" evidence="1">
    <location>
        <begin position="15"/>
        <end position="35"/>
    </location>
</feature>
<feature type="transmembrane region" description="Helical" evidence="1">
    <location>
        <begin position="57"/>
        <end position="77"/>
    </location>
</feature>
<organism>
    <name type="scientific">Gracilaria tenuistipitata var. liui</name>
    <name type="common">Red alga</name>
    <dbReference type="NCBI Taxonomy" id="285951"/>
    <lineage>
        <taxon>Eukaryota</taxon>
        <taxon>Rhodophyta</taxon>
        <taxon>Florideophyceae</taxon>
        <taxon>Rhodymeniophycidae</taxon>
        <taxon>Gracilariales</taxon>
        <taxon>Gracilariaceae</taxon>
        <taxon>Gracilaria</taxon>
        <taxon>Gracilaria tenuistipitata</taxon>
    </lineage>
</organism>